<protein>
    <recommendedName>
        <fullName evidence="1">Polyphosphate kinase</fullName>
        <ecNumber evidence="1">2.7.4.1</ecNumber>
    </recommendedName>
    <alternativeName>
        <fullName evidence="1">ATP-polyphosphate phosphotransferase</fullName>
    </alternativeName>
    <alternativeName>
        <fullName evidence="1">Polyphosphoric acid kinase</fullName>
    </alternativeName>
</protein>
<dbReference type="EC" id="2.7.4.1" evidence="1"/>
<dbReference type="EMBL" id="AP008934">
    <property type="protein sequence ID" value="BAE17578.1"/>
    <property type="molecule type" value="Genomic_DNA"/>
</dbReference>
<dbReference type="RefSeq" id="WP_011302400.1">
    <property type="nucleotide sequence ID" value="NZ_MTGA01000036.1"/>
</dbReference>
<dbReference type="SMR" id="Q4A040"/>
<dbReference type="GeneID" id="3616181"/>
<dbReference type="KEGG" id="ssp:SSP0433"/>
<dbReference type="PATRIC" id="fig|342451.11.peg.438"/>
<dbReference type="eggNOG" id="COG0855">
    <property type="taxonomic scope" value="Bacteria"/>
</dbReference>
<dbReference type="HOGENOM" id="CLU_009678_5_0_9"/>
<dbReference type="OrthoDB" id="9761456at2"/>
<dbReference type="Proteomes" id="UP000006371">
    <property type="component" value="Chromosome"/>
</dbReference>
<dbReference type="GO" id="GO:0009358">
    <property type="term" value="C:polyphosphate kinase complex"/>
    <property type="evidence" value="ECO:0007669"/>
    <property type="project" value="InterPro"/>
</dbReference>
<dbReference type="GO" id="GO:0005524">
    <property type="term" value="F:ATP binding"/>
    <property type="evidence" value="ECO:0007669"/>
    <property type="project" value="UniProtKB-KW"/>
</dbReference>
<dbReference type="GO" id="GO:0046872">
    <property type="term" value="F:metal ion binding"/>
    <property type="evidence" value="ECO:0007669"/>
    <property type="project" value="UniProtKB-KW"/>
</dbReference>
<dbReference type="GO" id="GO:0008976">
    <property type="term" value="F:polyphosphate kinase activity"/>
    <property type="evidence" value="ECO:0007669"/>
    <property type="project" value="UniProtKB-UniRule"/>
</dbReference>
<dbReference type="GO" id="GO:0006799">
    <property type="term" value="P:polyphosphate biosynthetic process"/>
    <property type="evidence" value="ECO:0007669"/>
    <property type="project" value="UniProtKB-UniRule"/>
</dbReference>
<dbReference type="CDD" id="cd09165">
    <property type="entry name" value="PLDc_PaPPK1_C1_like"/>
    <property type="match status" value="1"/>
</dbReference>
<dbReference type="CDD" id="cd09168">
    <property type="entry name" value="PLDc_PaPPK1_C2_like"/>
    <property type="match status" value="1"/>
</dbReference>
<dbReference type="Gene3D" id="3.30.870.10">
    <property type="entry name" value="Endonuclease Chain A"/>
    <property type="match status" value="2"/>
</dbReference>
<dbReference type="Gene3D" id="3.30.1840.10">
    <property type="entry name" value="Polyphosphate kinase middle domain"/>
    <property type="match status" value="1"/>
</dbReference>
<dbReference type="Gene3D" id="1.20.58.310">
    <property type="entry name" value="Polyphosphate kinase N-terminal domain"/>
    <property type="match status" value="1"/>
</dbReference>
<dbReference type="HAMAP" id="MF_00347">
    <property type="entry name" value="Polyphosphate_kinase"/>
    <property type="match status" value="1"/>
</dbReference>
<dbReference type="InterPro" id="IPR003414">
    <property type="entry name" value="PP_kinase"/>
</dbReference>
<dbReference type="InterPro" id="IPR041108">
    <property type="entry name" value="PP_kinase_C_1"/>
</dbReference>
<dbReference type="InterPro" id="IPR024953">
    <property type="entry name" value="PP_kinase_middle"/>
</dbReference>
<dbReference type="InterPro" id="IPR036830">
    <property type="entry name" value="PP_kinase_middle_dom_sf"/>
</dbReference>
<dbReference type="InterPro" id="IPR025200">
    <property type="entry name" value="PPK_C_dom2"/>
</dbReference>
<dbReference type="InterPro" id="IPR025198">
    <property type="entry name" value="PPK_N_dom"/>
</dbReference>
<dbReference type="InterPro" id="IPR036832">
    <property type="entry name" value="PPK_N_dom_sf"/>
</dbReference>
<dbReference type="NCBIfam" id="TIGR03705">
    <property type="entry name" value="poly_P_kin"/>
    <property type="match status" value="1"/>
</dbReference>
<dbReference type="NCBIfam" id="NF003917">
    <property type="entry name" value="PRK05443.1-1"/>
    <property type="match status" value="1"/>
</dbReference>
<dbReference type="NCBIfam" id="NF003918">
    <property type="entry name" value="PRK05443.1-2"/>
    <property type="match status" value="1"/>
</dbReference>
<dbReference type="NCBIfam" id="NF003920">
    <property type="entry name" value="PRK05443.2-1"/>
    <property type="match status" value="1"/>
</dbReference>
<dbReference type="NCBIfam" id="NF003921">
    <property type="entry name" value="PRK05443.2-2"/>
    <property type="match status" value="1"/>
</dbReference>
<dbReference type="PANTHER" id="PTHR30218">
    <property type="entry name" value="POLYPHOSPHATE KINASE"/>
    <property type="match status" value="1"/>
</dbReference>
<dbReference type="PANTHER" id="PTHR30218:SF0">
    <property type="entry name" value="POLYPHOSPHATE KINASE"/>
    <property type="match status" value="1"/>
</dbReference>
<dbReference type="Pfam" id="PF02503">
    <property type="entry name" value="PP_kinase"/>
    <property type="match status" value="1"/>
</dbReference>
<dbReference type="Pfam" id="PF13090">
    <property type="entry name" value="PP_kinase_C"/>
    <property type="match status" value="1"/>
</dbReference>
<dbReference type="Pfam" id="PF17941">
    <property type="entry name" value="PP_kinase_C_1"/>
    <property type="match status" value="1"/>
</dbReference>
<dbReference type="Pfam" id="PF13089">
    <property type="entry name" value="PP_kinase_N"/>
    <property type="match status" value="1"/>
</dbReference>
<dbReference type="PIRSF" id="PIRSF015589">
    <property type="entry name" value="PP_kinase"/>
    <property type="match status" value="1"/>
</dbReference>
<dbReference type="SUPFAM" id="SSF56024">
    <property type="entry name" value="Phospholipase D/nuclease"/>
    <property type="match status" value="2"/>
</dbReference>
<dbReference type="SUPFAM" id="SSF143724">
    <property type="entry name" value="PHP14-like"/>
    <property type="match status" value="1"/>
</dbReference>
<dbReference type="SUPFAM" id="SSF140356">
    <property type="entry name" value="PPK N-terminal domain-like"/>
    <property type="match status" value="1"/>
</dbReference>
<organism>
    <name type="scientific">Staphylococcus saprophyticus subsp. saprophyticus (strain ATCC 15305 / DSM 20229 / NCIMB 8711 / NCTC 7292 / S-41)</name>
    <dbReference type="NCBI Taxonomy" id="342451"/>
    <lineage>
        <taxon>Bacteria</taxon>
        <taxon>Bacillati</taxon>
        <taxon>Bacillota</taxon>
        <taxon>Bacilli</taxon>
        <taxon>Bacillales</taxon>
        <taxon>Staphylococcaceae</taxon>
        <taxon>Staphylococcus</taxon>
    </lineage>
</organism>
<name>PPK1_STAS1</name>
<proteinExistence type="inferred from homology"/>
<sequence length="719" mass="83478">MHRNLGDKDLNLPQYYNNRELSWLDFNYRVLQEAQDKNNPLLEQLNFISIFSSNLDEFFMVRVAGLQDQVKMGYDKPENKAQLTPKQQLVQIKLKNKEIVDLQYKRYNELIDDLKQYQVEIIKPEQLPDDLLPQLESEFKYGILPTLTPLGIDAYHPFPKLNNKSLNIFVDIDTEDDINSAIVQIPSLISRFYSFNKGDKQYIILIEDIITYFINDLFSGYTVLNTFTFRITRNADLTIHEDGAEDLLIEIERFLKERKRGTAVRLEVDGRQATHEDIVWIINQLDVHDNDVYFVDGPLDLTMLTDLVDHLSNKLKYLKYNKYVPQIPQSLGNHNIFDLSLKRDIFFHHPYESFEPIVDFIREAAEDPNTIAIKQTLYRVSKDSPIINSLKNAAENGKQVTVLVELKARFDEENNVHWARMLEEAGCHVIYGMTHLKTHSKIALVVKRMNNKLTSFIHLGTGNYNDKTANIYTDMGLITTNAEIAEDAINFFNYLSGYSVKPEYNKLIVAPFDIRDVFLARIDNEIKSHRENGNGKIIMKMNSLTDKDIILKLFEASCAGVKVQLIIRGICCLKPGVPGISENIEVVSIVGRFLEHSRIYHFHNNGDDIIYLSSADAMTRNMIKRVEILFPVEDKNIAKRLLDYMNLQLSDNQKGRYQDELGQYHYIENNLSPLNSQAFLMKEAMDYGQQLKEDNTRPQVMSVNERKGWFTKIRKQFRK</sequence>
<comment type="function">
    <text evidence="1">Catalyzes the reversible transfer of the terminal phosphate of ATP to form a long-chain polyphosphate (polyP).</text>
</comment>
<comment type="catalytic activity">
    <reaction evidence="1">
        <text>[phosphate](n) + ATP = [phosphate](n+1) + ADP</text>
        <dbReference type="Rhea" id="RHEA:19573"/>
        <dbReference type="Rhea" id="RHEA-COMP:9859"/>
        <dbReference type="Rhea" id="RHEA-COMP:14280"/>
        <dbReference type="ChEBI" id="CHEBI:16838"/>
        <dbReference type="ChEBI" id="CHEBI:30616"/>
        <dbReference type="ChEBI" id="CHEBI:456216"/>
        <dbReference type="EC" id="2.7.4.1"/>
    </reaction>
</comment>
<comment type="cofactor">
    <cofactor evidence="1">
        <name>Mg(2+)</name>
        <dbReference type="ChEBI" id="CHEBI:18420"/>
    </cofactor>
</comment>
<comment type="PTM">
    <text evidence="1">An intermediate of this reaction is the autophosphorylated ppk in which a phosphate is covalently linked to a histidine residue through a N-P bond.</text>
</comment>
<comment type="similarity">
    <text evidence="1">Belongs to the polyphosphate kinase 1 (PPK1) family.</text>
</comment>
<evidence type="ECO:0000255" key="1">
    <source>
        <dbReference type="HAMAP-Rule" id="MF_00347"/>
    </source>
</evidence>
<gene>
    <name evidence="1" type="primary">ppk</name>
    <name type="ordered locus">SSP0433</name>
</gene>
<feature type="chain" id="PRO_0000128660" description="Polyphosphate kinase">
    <location>
        <begin position="1"/>
        <end position="719"/>
    </location>
</feature>
<feature type="domain" description="PLD phosphodiesterase" evidence="1">
    <location>
        <begin position="434"/>
        <end position="468"/>
    </location>
</feature>
<feature type="active site" description="Phosphohistidine intermediate" evidence="1">
    <location>
        <position position="439"/>
    </location>
</feature>
<feature type="binding site" evidence="1">
    <location>
        <position position="54"/>
    </location>
    <ligand>
        <name>ATP</name>
        <dbReference type="ChEBI" id="CHEBI:30616"/>
    </ligand>
</feature>
<feature type="binding site" evidence="1">
    <location>
        <position position="379"/>
    </location>
    <ligand>
        <name>Mg(2+)</name>
        <dbReference type="ChEBI" id="CHEBI:18420"/>
    </ligand>
</feature>
<feature type="binding site" evidence="1">
    <location>
        <position position="409"/>
    </location>
    <ligand>
        <name>Mg(2+)</name>
        <dbReference type="ChEBI" id="CHEBI:18420"/>
    </ligand>
</feature>
<feature type="binding site" evidence="1">
    <location>
        <position position="472"/>
    </location>
    <ligand>
        <name>ATP</name>
        <dbReference type="ChEBI" id="CHEBI:30616"/>
    </ligand>
</feature>
<feature type="binding site" evidence="1">
    <location>
        <position position="568"/>
    </location>
    <ligand>
        <name>ATP</name>
        <dbReference type="ChEBI" id="CHEBI:30616"/>
    </ligand>
</feature>
<feature type="binding site" evidence="1">
    <location>
        <position position="596"/>
    </location>
    <ligand>
        <name>ATP</name>
        <dbReference type="ChEBI" id="CHEBI:30616"/>
    </ligand>
</feature>
<accession>Q4A040</accession>
<reference key="1">
    <citation type="journal article" date="2005" name="Proc. Natl. Acad. Sci. U.S.A.">
        <title>Whole genome sequence of Staphylococcus saprophyticus reveals the pathogenesis of uncomplicated urinary tract infection.</title>
        <authorList>
            <person name="Kuroda M."/>
            <person name="Yamashita A."/>
            <person name="Hirakawa H."/>
            <person name="Kumano M."/>
            <person name="Morikawa K."/>
            <person name="Higashide M."/>
            <person name="Maruyama A."/>
            <person name="Inose Y."/>
            <person name="Matoba K."/>
            <person name="Toh H."/>
            <person name="Kuhara S."/>
            <person name="Hattori M."/>
            <person name="Ohta T."/>
        </authorList>
    </citation>
    <scope>NUCLEOTIDE SEQUENCE [LARGE SCALE GENOMIC DNA]</scope>
    <source>
        <strain>ATCC 15305 / DSM 20229 / NCIMB 8711 / NCTC 7292 / S-41</strain>
    </source>
</reference>
<keyword id="KW-0067">ATP-binding</keyword>
<keyword id="KW-0418">Kinase</keyword>
<keyword id="KW-0460">Magnesium</keyword>
<keyword id="KW-0479">Metal-binding</keyword>
<keyword id="KW-0547">Nucleotide-binding</keyword>
<keyword id="KW-0597">Phosphoprotein</keyword>
<keyword id="KW-1185">Reference proteome</keyword>
<keyword id="KW-0808">Transferase</keyword>